<comment type="function">
    <text evidence="2 3 4">Ammonium transporter that mediates the excretion of ammonium. Controls ammonium homeostasis during growth and development. Ammonium has been shown to function as a morphogen at multiple steps during the development.</text>
</comment>
<comment type="subcellular location">
    <subcellularLocation>
        <location evidence="5">Cell membrane</location>
        <topology evidence="5">Multi-pass membrane protein</topology>
    </subcellularLocation>
    <subcellularLocation>
        <location evidence="5">Endosome membrane</location>
        <topology evidence="5">Multi-pass membrane protein</topology>
    </subcellularLocation>
    <subcellularLocation>
        <location evidence="5">Lysosome membrane</location>
        <topology evidence="5">Multi-pass membrane protein</topology>
    </subcellularLocation>
    <subcellularLocation>
        <location evidence="5">Cytoplasmic vesicle</location>
        <location evidence="5">Phagosome membrane</location>
        <topology evidence="5">Multi-pass membrane protein</topology>
    </subcellularLocation>
</comment>
<comment type="developmental stage">
    <text evidence="2">Predominantly found in the prestalk of the slug.</text>
</comment>
<comment type="disruption phenotype">
    <text evidence="3">Shortens transitional period (when fingers and migrating slugs assess their environment to determine the appropriateness of that environment for culmination and fruiting body formation) of 1 to 2 hours and rarely forms slugs under standard conditions of development. Gives a slightly enhanced growth rate in axenic cultures.</text>
</comment>
<comment type="similarity">
    <text evidence="6">Belongs to the ammonia transporter channel (TC 1.A.11.2) family.</text>
</comment>
<accession>Q9BLG4</accession>
<accession>Q54ZJ7</accession>
<dbReference type="EMBL" id="AF510716">
    <property type="protein sequence ID" value="AAP47145.1"/>
    <property type="molecule type" value="mRNA"/>
</dbReference>
<dbReference type="EMBL" id="AB049067">
    <property type="protein sequence ID" value="BAB39709.1"/>
    <property type="molecule type" value="Genomic_DNA"/>
</dbReference>
<dbReference type="EMBL" id="AAFI02000020">
    <property type="protein sequence ID" value="EAL68714.1"/>
    <property type="molecule type" value="Genomic_DNA"/>
</dbReference>
<dbReference type="RefSeq" id="XP_642645.1">
    <property type="nucleotide sequence ID" value="XM_637553.1"/>
</dbReference>
<dbReference type="SMR" id="Q9BLG4"/>
<dbReference type="FunCoup" id="Q9BLG4">
    <property type="interactions" value="1"/>
</dbReference>
<dbReference type="STRING" id="44689.Q9BLG4"/>
<dbReference type="TCDB" id="1.A.11.1.7">
    <property type="family name" value="the ammonium transporter channel (amt) family"/>
</dbReference>
<dbReference type="PaxDb" id="44689-DDB0185017"/>
<dbReference type="EnsemblProtists" id="EAL68714">
    <property type="protein sequence ID" value="EAL68714"/>
    <property type="gene ID" value="DDB_G0277503"/>
</dbReference>
<dbReference type="GeneID" id="8621061"/>
<dbReference type="KEGG" id="ddi:DDB_G0277503"/>
<dbReference type="dictyBase" id="DDB_G0277503">
    <property type="gene designation" value="amtA"/>
</dbReference>
<dbReference type="VEuPathDB" id="AmoebaDB:DDB_G0277503"/>
<dbReference type="eggNOG" id="KOG0682">
    <property type="taxonomic scope" value="Eukaryota"/>
</dbReference>
<dbReference type="HOGENOM" id="CLU_000445_33_0_1"/>
<dbReference type="InParanoid" id="Q9BLG4"/>
<dbReference type="OMA" id="GFPTTPM"/>
<dbReference type="PhylomeDB" id="Q9BLG4"/>
<dbReference type="PRO" id="PR:Q9BLG4"/>
<dbReference type="Proteomes" id="UP000002195">
    <property type="component" value="Chromosome 2"/>
</dbReference>
<dbReference type="GO" id="GO:0000421">
    <property type="term" value="C:autophagosome membrane"/>
    <property type="evidence" value="ECO:0000314"/>
    <property type="project" value="dictyBase"/>
</dbReference>
<dbReference type="GO" id="GO:0036020">
    <property type="term" value="C:endolysosome membrane"/>
    <property type="evidence" value="ECO:0000314"/>
    <property type="project" value="dictyBase"/>
</dbReference>
<dbReference type="GO" id="GO:0140220">
    <property type="term" value="C:pathogen-containing vacuole"/>
    <property type="evidence" value="ECO:0000314"/>
    <property type="project" value="dictyBase"/>
</dbReference>
<dbReference type="GO" id="GO:0030670">
    <property type="term" value="C:phagocytic vesicle membrane"/>
    <property type="evidence" value="ECO:0000314"/>
    <property type="project" value="dictyBase"/>
</dbReference>
<dbReference type="GO" id="GO:0005886">
    <property type="term" value="C:plasma membrane"/>
    <property type="evidence" value="ECO:0000314"/>
    <property type="project" value="dictyBase"/>
</dbReference>
<dbReference type="GO" id="GO:0005774">
    <property type="term" value="C:vacuolar membrane"/>
    <property type="evidence" value="ECO:0000314"/>
    <property type="project" value="dictyBase"/>
</dbReference>
<dbReference type="GO" id="GO:0008519">
    <property type="term" value="F:ammonium channel activity"/>
    <property type="evidence" value="ECO:0000314"/>
    <property type="project" value="dictyBase"/>
</dbReference>
<dbReference type="GO" id="GO:0072488">
    <property type="term" value="P:ammonium transmembrane transport"/>
    <property type="evidence" value="ECO:0000318"/>
    <property type="project" value="GO_Central"/>
</dbReference>
<dbReference type="GO" id="GO:0019954">
    <property type="term" value="P:asexual reproduction"/>
    <property type="evidence" value="ECO:0000315"/>
    <property type="project" value="dictyBase"/>
</dbReference>
<dbReference type="GO" id="GO:0097275">
    <property type="term" value="P:intracellular ammonium homeostasis"/>
    <property type="evidence" value="ECO:0000315"/>
    <property type="project" value="dictyBase"/>
</dbReference>
<dbReference type="GO" id="GO:0031159">
    <property type="term" value="P:positive regulation of aggregate size involved in sorocarp development"/>
    <property type="evidence" value="ECO:0000315"/>
    <property type="project" value="dictyBase"/>
</dbReference>
<dbReference type="GO" id="GO:0046903">
    <property type="term" value="P:secretion"/>
    <property type="evidence" value="ECO:0000315"/>
    <property type="project" value="dictyBase"/>
</dbReference>
<dbReference type="GO" id="GO:0030435">
    <property type="term" value="P:sporulation resulting in formation of a cellular spore"/>
    <property type="evidence" value="ECO:0000315"/>
    <property type="project" value="dictyBase"/>
</dbReference>
<dbReference type="FunFam" id="1.10.3430.10:FF:000011">
    <property type="entry name" value="Ammonium transporter"/>
    <property type="match status" value="1"/>
</dbReference>
<dbReference type="Gene3D" id="1.10.3430.10">
    <property type="entry name" value="Ammonium transporter AmtB like domains"/>
    <property type="match status" value="1"/>
</dbReference>
<dbReference type="InterPro" id="IPR029020">
    <property type="entry name" value="Ammonium/urea_transptr"/>
</dbReference>
<dbReference type="InterPro" id="IPR001905">
    <property type="entry name" value="Ammonium_transpt"/>
</dbReference>
<dbReference type="InterPro" id="IPR018047">
    <property type="entry name" value="Ammonium_transpt_CS"/>
</dbReference>
<dbReference type="InterPro" id="IPR024041">
    <property type="entry name" value="NH4_transpt_AmtB-like_dom"/>
</dbReference>
<dbReference type="NCBIfam" id="TIGR00836">
    <property type="entry name" value="amt"/>
    <property type="match status" value="1"/>
</dbReference>
<dbReference type="PANTHER" id="PTHR43029:SF21">
    <property type="entry name" value="AMMONIUM TRANSPORTER 1"/>
    <property type="match status" value="1"/>
</dbReference>
<dbReference type="PANTHER" id="PTHR43029">
    <property type="entry name" value="AMMONIUM TRANSPORTER MEP2"/>
    <property type="match status" value="1"/>
</dbReference>
<dbReference type="Pfam" id="PF00909">
    <property type="entry name" value="Ammonium_transp"/>
    <property type="match status" value="1"/>
</dbReference>
<dbReference type="SUPFAM" id="SSF111352">
    <property type="entry name" value="Ammonium transporter"/>
    <property type="match status" value="1"/>
</dbReference>
<dbReference type="PROSITE" id="PS01219">
    <property type="entry name" value="AMMONIUM_TRANSP"/>
    <property type="match status" value="1"/>
</dbReference>
<organism>
    <name type="scientific">Dictyostelium discoideum</name>
    <name type="common">Social amoeba</name>
    <dbReference type="NCBI Taxonomy" id="44689"/>
    <lineage>
        <taxon>Eukaryota</taxon>
        <taxon>Amoebozoa</taxon>
        <taxon>Evosea</taxon>
        <taxon>Eumycetozoa</taxon>
        <taxon>Dictyostelia</taxon>
        <taxon>Dictyosteliales</taxon>
        <taxon>Dictyosteliaceae</taxon>
        <taxon>Dictyostelium</taxon>
    </lineage>
</organism>
<protein>
    <recommendedName>
        <fullName>Ammonium transporter 1</fullName>
    </recommendedName>
</protein>
<name>AMT1_DICDI</name>
<gene>
    <name type="primary">amtA</name>
    <name type="ORF">DDB_G0277503</name>
</gene>
<keyword id="KW-0924">Ammonia transport</keyword>
<keyword id="KW-1003">Cell membrane</keyword>
<keyword id="KW-0968">Cytoplasmic vesicle</keyword>
<keyword id="KW-0967">Endosome</keyword>
<keyword id="KW-0458">Lysosome</keyword>
<keyword id="KW-0472">Membrane</keyword>
<keyword id="KW-1185">Reference proteome</keyword>
<keyword id="KW-0812">Transmembrane</keyword>
<keyword id="KW-1133">Transmembrane helix</keyword>
<keyword id="KW-0813">Transport</keyword>
<sequence>MVAGEIIKGVAAEITNGSSSSVVQKYLDCANQVAPDPGNTTWVLLSTILVLGMMPALAFFEAGLLRSKNTLSIITQIMSGIVVLTVMWQAFGYSLTFGPDQKGIIGNLDHAFLINVSYDDCSPNAPNIPAAAYAFFMMMFANITPLLMTGAFAERVKFKAFIALTVAWEIIVFYPVAHWIWGGGWLHKYFGVLDFAGGIVIHTSAGVSALVIALYVGRRKDFEKYGGEFPPSNLPLATIGAALLWMGWFGFNAGSALAAGNIATSAVASTQIGGSFSAIVWIILSAAKGKPNTVSVINGVIAGLAGITPASGYINSQYSIGLGICLGLASYYSVVLLKHKLHIDDALDVSSVHGLTGIIGSLAIGFCAELSVNPNGANGAFYGNPKLIGTQLLGVVSVAVWAAAWTWVLLKIIDATIGVKIDESEEELGLDLVEHGEFAYHNISLQGNENHYSSVINSHDFFK</sequence>
<reference key="1">
    <citation type="submission" date="2002-05" db="EMBL/GenBank/DDBJ databases">
        <title>Cloning and characterization of three ammonium transporter genes in AX2 strain of Dictyostelium discoideum.</title>
        <authorList>
            <person name="Chen Y."/>
            <person name="Huang C.-H."/>
        </authorList>
    </citation>
    <scope>NUCLEOTIDE SEQUENCE [MRNA]</scope>
    <source>
        <strain>AX2</strain>
    </source>
</reference>
<reference key="2">
    <citation type="journal article" date="2007" name="Eukaryot. Cell">
        <title>Regulation of ammonia homeostasis by the ammonium transporter AmtA in Dictyostelium discoideum.</title>
        <authorList>
            <person name="Yoshino R."/>
            <person name="Morio T."/>
            <person name="Yamada Y."/>
            <person name="Kuwayama H."/>
            <person name="Sameshima M."/>
            <person name="Tanaka Y."/>
            <person name="Sesaki H."/>
            <person name="Iijima M."/>
        </authorList>
    </citation>
    <scope>NUCLEOTIDE SEQUENCE [GENOMIC DNA]</scope>
    <scope>FUNCTION</scope>
    <source>
        <strain>AX4</strain>
    </source>
</reference>
<reference key="3">
    <citation type="journal article" date="2002" name="Nature">
        <title>Sequence and analysis of chromosome 2 of Dictyostelium discoideum.</title>
        <authorList>
            <person name="Gloeckner G."/>
            <person name="Eichinger L."/>
            <person name="Szafranski K."/>
            <person name="Pachebat J.A."/>
            <person name="Bankier A.T."/>
            <person name="Dear P.H."/>
            <person name="Lehmann R."/>
            <person name="Baumgart C."/>
            <person name="Parra G."/>
            <person name="Abril J.F."/>
            <person name="Guigo R."/>
            <person name="Kumpf K."/>
            <person name="Tunggal B."/>
            <person name="Cox E.C."/>
            <person name="Quail M.A."/>
            <person name="Platzer M."/>
            <person name="Rosenthal A."/>
            <person name="Noegel A.A."/>
        </authorList>
    </citation>
    <scope>NUCLEOTIDE SEQUENCE [LARGE SCALE GENOMIC DNA]</scope>
    <source>
        <strain>AX4</strain>
    </source>
</reference>
<reference key="4">
    <citation type="journal article" date="2005" name="Nature">
        <title>The genome of the social amoeba Dictyostelium discoideum.</title>
        <authorList>
            <person name="Eichinger L."/>
            <person name="Pachebat J.A."/>
            <person name="Gloeckner G."/>
            <person name="Rajandream M.A."/>
            <person name="Sucgang R."/>
            <person name="Berriman M."/>
            <person name="Song J."/>
            <person name="Olsen R."/>
            <person name="Szafranski K."/>
            <person name="Xu Q."/>
            <person name="Tunggal B."/>
            <person name="Kummerfeld S."/>
            <person name="Madera M."/>
            <person name="Konfortov B.A."/>
            <person name="Rivero F."/>
            <person name="Bankier A.T."/>
            <person name="Lehmann R."/>
            <person name="Hamlin N."/>
            <person name="Davies R."/>
            <person name="Gaudet P."/>
            <person name="Fey P."/>
            <person name="Pilcher K."/>
            <person name="Chen G."/>
            <person name="Saunders D."/>
            <person name="Sodergren E.J."/>
            <person name="Davis P."/>
            <person name="Kerhornou A."/>
            <person name="Nie X."/>
            <person name="Hall N."/>
            <person name="Anjard C."/>
            <person name="Hemphill L."/>
            <person name="Bason N."/>
            <person name="Farbrother P."/>
            <person name="Desany B."/>
            <person name="Just E."/>
            <person name="Morio T."/>
            <person name="Rost R."/>
            <person name="Churcher C.M."/>
            <person name="Cooper J."/>
            <person name="Haydock S."/>
            <person name="van Driessche N."/>
            <person name="Cronin A."/>
            <person name="Goodhead I."/>
            <person name="Muzny D.M."/>
            <person name="Mourier T."/>
            <person name="Pain A."/>
            <person name="Lu M."/>
            <person name="Harper D."/>
            <person name="Lindsay R."/>
            <person name="Hauser H."/>
            <person name="James K.D."/>
            <person name="Quiles M."/>
            <person name="Madan Babu M."/>
            <person name="Saito T."/>
            <person name="Buchrieser C."/>
            <person name="Wardroper A."/>
            <person name="Felder M."/>
            <person name="Thangavelu M."/>
            <person name="Johnson D."/>
            <person name="Knights A."/>
            <person name="Loulseged H."/>
            <person name="Mungall K.L."/>
            <person name="Oliver K."/>
            <person name="Price C."/>
            <person name="Quail M.A."/>
            <person name="Urushihara H."/>
            <person name="Hernandez J."/>
            <person name="Rabbinowitsch E."/>
            <person name="Steffen D."/>
            <person name="Sanders M."/>
            <person name="Ma J."/>
            <person name="Kohara Y."/>
            <person name="Sharp S."/>
            <person name="Simmonds M.N."/>
            <person name="Spiegler S."/>
            <person name="Tivey A."/>
            <person name="Sugano S."/>
            <person name="White B."/>
            <person name="Walker D."/>
            <person name="Woodward J.R."/>
            <person name="Winckler T."/>
            <person name="Tanaka Y."/>
            <person name="Shaulsky G."/>
            <person name="Schleicher M."/>
            <person name="Weinstock G.M."/>
            <person name="Rosenthal A."/>
            <person name="Cox E.C."/>
            <person name="Chisholm R.L."/>
            <person name="Gibbs R.A."/>
            <person name="Loomis W.F."/>
            <person name="Platzer M."/>
            <person name="Kay R.R."/>
            <person name="Williams J.G."/>
            <person name="Dear P.H."/>
            <person name="Noegel A.A."/>
            <person name="Barrell B.G."/>
            <person name="Kuspa A."/>
        </authorList>
    </citation>
    <scope>NUCLEOTIDE SEQUENCE [LARGE SCALE GENOMIC DNA]</scope>
    <source>
        <strain>AX4</strain>
    </source>
</reference>
<reference key="5">
    <citation type="journal article" date="2003" name="Differentiation">
        <title>Temporal and spatial expression of ammonium transporter genes during growth and development of Dictyostelium discoideum.</title>
        <authorList>
            <person name="Follstaedt S.C."/>
            <person name="Kirsten J.H."/>
            <person name="Singleton C.K."/>
        </authorList>
    </citation>
    <scope>FUNCTION</scope>
    <scope>DEVELOPMENTAL STAGE</scope>
</reference>
<reference key="6">
    <citation type="journal article" date="2006" name="Eukaryot. Cell">
        <title>Function of ammonium transporter A in the initiation of culmination of development in Dictyostelium discoideum.</title>
        <authorList>
            <person name="Singleton C.K."/>
            <person name="Kirsten J.H."/>
            <person name="Dinsmore C.J."/>
        </authorList>
    </citation>
    <scope>DISRUPTION PHENOTYPE</scope>
    <scope>FUNCTION</scope>
</reference>
<reference key="7">
    <citation type="journal article" date="2008" name="BMC Cell Biol.">
        <title>Subcellular localization of ammonium transporters in Dictyostelium discoideum.</title>
        <authorList>
            <person name="Kirsten J.H."/>
            <person name="Xiong Y."/>
            <person name="Davis C.T."/>
            <person name="Singleton C.K."/>
        </authorList>
    </citation>
    <scope>SUBCELLULAR LOCATION</scope>
    <scope>TOPOLOGY</scope>
</reference>
<evidence type="ECO:0000255" key="1"/>
<evidence type="ECO:0000269" key="2">
    <source>
    </source>
</evidence>
<evidence type="ECO:0000269" key="3">
    <source>
    </source>
</evidence>
<evidence type="ECO:0000269" key="4">
    <source>
    </source>
</evidence>
<evidence type="ECO:0000269" key="5">
    <source>
    </source>
</evidence>
<evidence type="ECO:0000305" key="6"/>
<feature type="chain" id="PRO_0000365573" description="Ammonium transporter 1">
    <location>
        <begin position="1"/>
        <end position="463"/>
    </location>
</feature>
<feature type="topological domain" description="Extracellular" evidence="5">
    <location>
        <begin position="1"/>
        <end position="39"/>
    </location>
</feature>
<feature type="transmembrane region" description="Helical" evidence="1">
    <location>
        <begin position="40"/>
        <end position="60"/>
    </location>
</feature>
<feature type="topological domain" description="Cytoplasmic" evidence="5">
    <location>
        <begin position="61"/>
        <end position="76"/>
    </location>
</feature>
<feature type="transmembrane region" description="Helical" evidence="1">
    <location>
        <begin position="77"/>
        <end position="97"/>
    </location>
</feature>
<feature type="topological domain" description="Extracellular" evidence="5">
    <location>
        <begin position="98"/>
        <end position="127"/>
    </location>
</feature>
<feature type="transmembrane region" description="Helical" evidence="1">
    <location>
        <begin position="128"/>
        <end position="148"/>
    </location>
</feature>
<feature type="topological domain" description="Cytoplasmic" evidence="5">
    <location>
        <begin position="149"/>
        <end position="160"/>
    </location>
</feature>
<feature type="transmembrane region" description="Helical" evidence="1">
    <location>
        <begin position="161"/>
        <end position="181"/>
    </location>
</feature>
<feature type="topological domain" description="Extracellular" evidence="5">
    <location>
        <begin position="182"/>
        <end position="194"/>
    </location>
</feature>
<feature type="transmembrane region" description="Helical" evidence="1">
    <location>
        <begin position="195"/>
        <end position="215"/>
    </location>
</feature>
<feature type="topological domain" description="Cytoplasmic" evidence="5">
    <location>
        <begin position="216"/>
        <end position="233"/>
    </location>
</feature>
<feature type="transmembrane region" description="Helical" evidence="1">
    <location>
        <begin position="234"/>
        <end position="254"/>
    </location>
</feature>
<feature type="topological domain" description="Extracellular" evidence="5">
    <location>
        <begin position="255"/>
        <end position="265"/>
    </location>
</feature>
<feature type="transmembrane region" description="Helical" evidence="1">
    <location>
        <begin position="266"/>
        <end position="286"/>
    </location>
</feature>
<feature type="topological domain" description="Cytoplasmic" evidence="5">
    <location>
        <begin position="287"/>
        <end position="293"/>
    </location>
</feature>
<feature type="transmembrane region" description="Helical" evidence="1">
    <location>
        <begin position="294"/>
        <end position="314"/>
    </location>
</feature>
<feature type="topological domain" description="Extracellular" evidence="5">
    <location>
        <begin position="315"/>
        <end position="316"/>
    </location>
</feature>
<feature type="transmembrane region" description="Helical" evidence="1">
    <location>
        <begin position="317"/>
        <end position="337"/>
    </location>
</feature>
<feature type="topological domain" description="Cytoplasmic" evidence="5">
    <location>
        <begin position="338"/>
        <end position="351"/>
    </location>
</feature>
<feature type="transmembrane region" description="Helical" evidence="1">
    <location>
        <begin position="352"/>
        <end position="372"/>
    </location>
</feature>
<feature type="topological domain" description="Extracellular" evidence="5">
    <location>
        <begin position="373"/>
        <end position="392"/>
    </location>
</feature>
<feature type="transmembrane region" description="Helical" evidence="1">
    <location>
        <begin position="393"/>
        <end position="413"/>
    </location>
</feature>
<feature type="topological domain" description="Cytoplasmic" evidence="5">
    <location>
        <begin position="414"/>
        <end position="463"/>
    </location>
</feature>
<proteinExistence type="evidence at protein level"/>